<dbReference type="EC" id="2.7.11.22" evidence="12"/>
<dbReference type="EMBL" id="U63337">
    <property type="protein sequence ID" value="AAB37128.1"/>
    <property type="molecule type" value="mRNA"/>
</dbReference>
<dbReference type="EMBL" id="AJ223732">
    <property type="protein sequence ID" value="CAA11533.1"/>
    <property type="molecule type" value="mRNA"/>
</dbReference>
<dbReference type="EMBL" id="AJ223733">
    <property type="protein sequence ID" value="CAA11534.1"/>
    <property type="molecule type" value="Genomic_DNA"/>
</dbReference>
<dbReference type="EMBL" id="AJ223733">
    <property type="protein sequence ID" value="CAA11535.1"/>
    <property type="molecule type" value="Genomic_DNA"/>
</dbReference>
<dbReference type="EMBL" id="BC005654">
    <property type="protein sequence ID" value="AAH05654.1"/>
    <property type="molecule type" value="mRNA"/>
</dbReference>
<dbReference type="CCDS" id="CCDS24288.1">
    <molecule id="P97377-2"/>
</dbReference>
<dbReference type="CCDS" id="CCDS24289.1">
    <molecule id="P97377-1"/>
</dbReference>
<dbReference type="RefSeq" id="NP_058036.1">
    <molecule id="P97377-2"/>
    <property type="nucleotide sequence ID" value="NM_016756.5"/>
</dbReference>
<dbReference type="RefSeq" id="NP_904326.1">
    <molecule id="P97377-1"/>
    <property type="nucleotide sequence ID" value="NM_183417.4"/>
</dbReference>
<dbReference type="SMR" id="P97377"/>
<dbReference type="BioGRID" id="198644">
    <property type="interactions" value="35"/>
</dbReference>
<dbReference type="ComplexPortal" id="CPX-2065">
    <property type="entry name" value="Cyclin A1-CDK2 complex"/>
</dbReference>
<dbReference type="ComplexPortal" id="CPX-2066">
    <property type="entry name" value="Cyclin A2-CDK2 complex"/>
</dbReference>
<dbReference type="ComplexPortal" id="CPX-2071">
    <property type="entry name" value="Cyclin B3-CDK2 complex"/>
</dbReference>
<dbReference type="ComplexPortal" id="CPX-2081">
    <property type="entry name" value="Cyclin E1-CDK2 complex"/>
</dbReference>
<dbReference type="ComplexPortal" id="CPX-2082">
    <property type="entry name" value="Cyclin E2-CDK2 complex"/>
</dbReference>
<dbReference type="CORUM" id="P97377"/>
<dbReference type="DIP" id="DIP-24176N"/>
<dbReference type="ELM" id="P97377"/>
<dbReference type="FunCoup" id="P97377">
    <property type="interactions" value="2461"/>
</dbReference>
<dbReference type="IntAct" id="P97377">
    <property type="interactions" value="7"/>
</dbReference>
<dbReference type="MINT" id="P97377"/>
<dbReference type="STRING" id="10090.ENSMUSP00000026416"/>
<dbReference type="ChEMBL" id="CHEMBL4106185"/>
<dbReference type="ChEMBL" id="CHEMBL4106186"/>
<dbReference type="iPTMnet" id="P97377"/>
<dbReference type="PhosphoSitePlus" id="P97377"/>
<dbReference type="SwissPalm" id="P97377"/>
<dbReference type="jPOST" id="P97377"/>
<dbReference type="PaxDb" id="10090-ENSMUSP00000026416"/>
<dbReference type="PeptideAtlas" id="P97377"/>
<dbReference type="ProteomicsDB" id="281437">
    <molecule id="P97377-1"/>
</dbReference>
<dbReference type="ProteomicsDB" id="281438">
    <molecule id="P97377-2"/>
</dbReference>
<dbReference type="Pumba" id="P97377"/>
<dbReference type="Antibodypedia" id="3404">
    <property type="antibodies" value="1759 antibodies from 51 providers"/>
</dbReference>
<dbReference type="DNASU" id="12566"/>
<dbReference type="Ensembl" id="ENSMUST00000026415.9">
    <molecule id="P97377-2"/>
    <property type="protein sequence ID" value="ENSMUSP00000026415.8"/>
    <property type="gene ID" value="ENSMUSG00000025358.17"/>
</dbReference>
<dbReference type="Ensembl" id="ENSMUST00000026416.15">
    <molecule id="P97377-1"/>
    <property type="protein sequence ID" value="ENSMUSP00000026416.8"/>
    <property type="gene ID" value="ENSMUSG00000025358.17"/>
</dbReference>
<dbReference type="GeneID" id="12566"/>
<dbReference type="KEGG" id="mmu:12566"/>
<dbReference type="UCSC" id="uc007hny.2">
    <molecule id="P97377-1"/>
    <property type="organism name" value="mouse"/>
</dbReference>
<dbReference type="AGR" id="MGI:104772"/>
<dbReference type="CTD" id="1017"/>
<dbReference type="MGI" id="MGI:104772">
    <property type="gene designation" value="Cdk2"/>
</dbReference>
<dbReference type="VEuPathDB" id="HostDB:ENSMUSG00000025358"/>
<dbReference type="eggNOG" id="KOG0594">
    <property type="taxonomic scope" value="Eukaryota"/>
</dbReference>
<dbReference type="GeneTree" id="ENSGT00940000159517"/>
<dbReference type="HOGENOM" id="CLU_000288_181_1_1"/>
<dbReference type="InParanoid" id="P97377"/>
<dbReference type="OMA" id="WSLACIY"/>
<dbReference type="OrthoDB" id="1732493at2759"/>
<dbReference type="PhylomeDB" id="P97377"/>
<dbReference type="TreeFam" id="TF101021"/>
<dbReference type="BRENDA" id="2.7.11.22">
    <property type="organism ID" value="3474"/>
</dbReference>
<dbReference type="Reactome" id="R-MMU-1538133">
    <property type="pathway name" value="G0 and Early G1"/>
</dbReference>
<dbReference type="Reactome" id="R-MMU-171319">
    <property type="pathway name" value="Telomere Extension By Telomerase"/>
</dbReference>
<dbReference type="Reactome" id="R-MMU-176187">
    <property type="pathway name" value="Activation of ATR in response to replication stress"/>
</dbReference>
<dbReference type="Reactome" id="R-MMU-176408">
    <property type="pathway name" value="Regulation of APC/C activators between G1/S and early anaphase"/>
</dbReference>
<dbReference type="Reactome" id="R-MMU-187577">
    <property type="pathway name" value="SCF(Skp2)-mediated degradation of p27/p21"/>
</dbReference>
<dbReference type="Reactome" id="R-MMU-2559582">
    <property type="pathway name" value="Senescence-Associated Secretory Phenotype (SASP)"/>
</dbReference>
<dbReference type="Reactome" id="R-MMU-2559586">
    <property type="pathway name" value="DNA Damage/Telomere Stress Induced Senescence"/>
</dbReference>
<dbReference type="Reactome" id="R-MMU-5693607">
    <property type="pathway name" value="Processing of DNA double-strand break ends"/>
</dbReference>
<dbReference type="Reactome" id="R-MMU-6804116">
    <property type="pathway name" value="TP53 Regulates Transcription of Genes Involved in G1 Cell Cycle Arrest"/>
</dbReference>
<dbReference type="Reactome" id="R-MMU-6804756">
    <property type="pathway name" value="Regulation of TP53 Activity through Phosphorylation"/>
</dbReference>
<dbReference type="Reactome" id="R-MMU-6804757">
    <property type="pathway name" value="Regulation of TP53 Degradation"/>
</dbReference>
<dbReference type="Reactome" id="R-MMU-68911">
    <property type="pathway name" value="G2 Phase"/>
</dbReference>
<dbReference type="Reactome" id="R-MMU-68949">
    <property type="pathway name" value="Orc1 removal from chromatin"/>
</dbReference>
<dbReference type="Reactome" id="R-MMU-68962">
    <property type="pathway name" value="Activation of the pre-replicative complex"/>
</dbReference>
<dbReference type="Reactome" id="R-MMU-69017">
    <property type="pathway name" value="CDK-mediated phosphorylation and removal of Cdc6"/>
</dbReference>
<dbReference type="Reactome" id="R-MMU-69200">
    <property type="pathway name" value="Phosphorylation of proteins involved in G1/S transition by active Cyclin E:Cdk2 complexes"/>
</dbReference>
<dbReference type="Reactome" id="R-MMU-69202">
    <property type="pathway name" value="Cyclin E associated events during G1/S transition"/>
</dbReference>
<dbReference type="Reactome" id="R-MMU-69231">
    <property type="pathway name" value="Cyclin D associated events in G1"/>
</dbReference>
<dbReference type="Reactome" id="R-MMU-69273">
    <property type="pathway name" value="Cyclin A/B1/B2 associated events during G2/M transition"/>
</dbReference>
<dbReference type="Reactome" id="R-MMU-69563">
    <property type="pathway name" value="p53-Dependent G1 DNA Damage Response"/>
</dbReference>
<dbReference type="Reactome" id="R-MMU-69656">
    <property type="pathway name" value="Cyclin A:Cdk2-associated events at S phase entry"/>
</dbReference>
<dbReference type="Reactome" id="R-MMU-8849470">
    <property type="pathway name" value="PTK6 Regulates Cell Cycle"/>
</dbReference>
<dbReference type="Reactome" id="R-MMU-9616222">
    <property type="pathway name" value="Transcriptional regulation of granulopoiesis"/>
</dbReference>
<dbReference type="BioGRID-ORCS" id="12566">
    <property type="hits" value="5 hits in 121 CRISPR screens"/>
</dbReference>
<dbReference type="ChiTaRS" id="Cdk2">
    <property type="organism name" value="mouse"/>
</dbReference>
<dbReference type="PRO" id="PR:P97377"/>
<dbReference type="Proteomes" id="UP000000589">
    <property type="component" value="Chromosome 10"/>
</dbReference>
<dbReference type="RNAct" id="P97377">
    <property type="molecule type" value="protein"/>
</dbReference>
<dbReference type="Bgee" id="ENSMUSG00000025358">
    <property type="expression patterns" value="Expressed in spermatocyte and 235 other cell types or tissues"/>
</dbReference>
<dbReference type="ExpressionAtlas" id="P97377">
    <property type="expression patterns" value="baseline and differential"/>
</dbReference>
<dbReference type="GO" id="GO:0015030">
    <property type="term" value="C:Cajal body"/>
    <property type="evidence" value="ECO:0007669"/>
    <property type="project" value="UniProtKB-SubCell"/>
</dbReference>
<dbReference type="GO" id="GO:0005813">
    <property type="term" value="C:centrosome"/>
    <property type="evidence" value="ECO:0007669"/>
    <property type="project" value="UniProtKB-SubCell"/>
</dbReference>
<dbReference type="GO" id="GO:0000781">
    <property type="term" value="C:chromosome, telomeric region"/>
    <property type="evidence" value="ECO:0000314"/>
    <property type="project" value="MGI"/>
</dbReference>
<dbReference type="GO" id="GO:0000793">
    <property type="term" value="C:condensed chromosome"/>
    <property type="evidence" value="ECO:0000314"/>
    <property type="project" value="MGI"/>
</dbReference>
<dbReference type="GO" id="GO:0097123">
    <property type="term" value="C:cyclin A1-CDK2 complex"/>
    <property type="evidence" value="ECO:0000314"/>
    <property type="project" value="MGI"/>
</dbReference>
<dbReference type="GO" id="GO:0097124">
    <property type="term" value="C:cyclin A2-CDK2 complex"/>
    <property type="evidence" value="ECO:0000314"/>
    <property type="project" value="MGI"/>
</dbReference>
<dbReference type="GO" id="GO:0097134">
    <property type="term" value="C:cyclin E1-CDK2 complex"/>
    <property type="evidence" value="ECO:0000314"/>
    <property type="project" value="MGI"/>
</dbReference>
<dbReference type="GO" id="GO:0097135">
    <property type="term" value="C:cyclin E2-CDK2 complex"/>
    <property type="evidence" value="ECO:0000314"/>
    <property type="project" value="MGI"/>
</dbReference>
<dbReference type="GO" id="GO:0000307">
    <property type="term" value="C:cyclin-dependent protein kinase holoenzyme complex"/>
    <property type="evidence" value="ECO:0000353"/>
    <property type="project" value="MGI"/>
</dbReference>
<dbReference type="GO" id="GO:0005768">
    <property type="term" value="C:endosome"/>
    <property type="evidence" value="ECO:0007669"/>
    <property type="project" value="UniProtKB-SubCell"/>
</dbReference>
<dbReference type="GO" id="GO:0001673">
    <property type="term" value="C:male germ cell nucleus"/>
    <property type="evidence" value="ECO:0000314"/>
    <property type="project" value="MGI"/>
</dbReference>
<dbReference type="GO" id="GO:0005635">
    <property type="term" value="C:nuclear envelope"/>
    <property type="evidence" value="ECO:0000314"/>
    <property type="project" value="MGI"/>
</dbReference>
<dbReference type="GO" id="GO:0005654">
    <property type="term" value="C:nucleoplasm"/>
    <property type="evidence" value="ECO:0000304"/>
    <property type="project" value="Reactome"/>
</dbReference>
<dbReference type="GO" id="GO:0005634">
    <property type="term" value="C:nucleus"/>
    <property type="evidence" value="ECO:0000314"/>
    <property type="project" value="UniProtKB"/>
</dbReference>
<dbReference type="GO" id="GO:0005667">
    <property type="term" value="C:transcription regulator complex"/>
    <property type="evidence" value="ECO:0000314"/>
    <property type="project" value="MGI"/>
</dbReference>
<dbReference type="GO" id="GO:0000805">
    <property type="term" value="C:X chromosome"/>
    <property type="evidence" value="ECO:0000314"/>
    <property type="project" value="MGI"/>
</dbReference>
<dbReference type="GO" id="GO:0001741">
    <property type="term" value="C:XY body"/>
    <property type="evidence" value="ECO:0000314"/>
    <property type="project" value="MGI"/>
</dbReference>
<dbReference type="GO" id="GO:0000806">
    <property type="term" value="C:Y chromosome"/>
    <property type="evidence" value="ECO:0000314"/>
    <property type="project" value="MGI"/>
</dbReference>
<dbReference type="GO" id="GO:0005524">
    <property type="term" value="F:ATP binding"/>
    <property type="evidence" value="ECO:0007669"/>
    <property type="project" value="UniProtKB-KW"/>
</dbReference>
<dbReference type="GO" id="GO:0030332">
    <property type="term" value="F:cyclin binding"/>
    <property type="evidence" value="ECO:0000314"/>
    <property type="project" value="BHF-UCL"/>
</dbReference>
<dbReference type="GO" id="GO:0097472">
    <property type="term" value="F:cyclin-dependent protein kinase activity"/>
    <property type="evidence" value="ECO:0000314"/>
    <property type="project" value="UniProtKB"/>
</dbReference>
<dbReference type="GO" id="GO:0004693">
    <property type="term" value="F:cyclin-dependent protein serine/threonine kinase activity"/>
    <property type="evidence" value="ECO:0000314"/>
    <property type="project" value="MGI"/>
</dbReference>
<dbReference type="GO" id="GO:0035173">
    <property type="term" value="F:histone kinase activity"/>
    <property type="evidence" value="ECO:0007669"/>
    <property type="project" value="Ensembl"/>
</dbReference>
<dbReference type="GO" id="GO:0016301">
    <property type="term" value="F:kinase activity"/>
    <property type="evidence" value="ECO:0000314"/>
    <property type="project" value="MGI"/>
</dbReference>
<dbReference type="GO" id="GO:0000287">
    <property type="term" value="F:magnesium ion binding"/>
    <property type="evidence" value="ECO:0000314"/>
    <property type="project" value="UniProtKB"/>
</dbReference>
<dbReference type="GO" id="GO:0019904">
    <property type="term" value="F:protein domain specific binding"/>
    <property type="evidence" value="ECO:0007669"/>
    <property type="project" value="Ensembl"/>
</dbReference>
<dbReference type="GO" id="GO:0004672">
    <property type="term" value="F:protein kinase activity"/>
    <property type="evidence" value="ECO:0000314"/>
    <property type="project" value="MGI"/>
</dbReference>
<dbReference type="GO" id="GO:0106310">
    <property type="term" value="F:protein serine kinase activity"/>
    <property type="evidence" value="ECO:0007669"/>
    <property type="project" value="RHEA"/>
</dbReference>
<dbReference type="GO" id="GO:0004674">
    <property type="term" value="F:protein serine/threonine kinase activity"/>
    <property type="evidence" value="ECO:0000314"/>
    <property type="project" value="UniProtKB"/>
</dbReference>
<dbReference type="GO" id="GO:0051301">
    <property type="term" value="P:cell division"/>
    <property type="evidence" value="ECO:0007669"/>
    <property type="project" value="UniProtKB-KW"/>
</dbReference>
<dbReference type="GO" id="GO:0007099">
    <property type="term" value="P:centriole replication"/>
    <property type="evidence" value="ECO:0007669"/>
    <property type="project" value="Ensembl"/>
</dbReference>
<dbReference type="GO" id="GO:0006281">
    <property type="term" value="P:DNA repair"/>
    <property type="evidence" value="ECO:0007669"/>
    <property type="project" value="UniProtKB-KW"/>
</dbReference>
<dbReference type="GO" id="GO:0006351">
    <property type="term" value="P:DNA-templated transcription"/>
    <property type="evidence" value="ECO:0000316"/>
    <property type="project" value="MGI"/>
</dbReference>
<dbReference type="GO" id="GO:0000082">
    <property type="term" value="P:G1/S transition of mitotic cell cycle"/>
    <property type="evidence" value="ECO:0000314"/>
    <property type="project" value="MGI"/>
</dbReference>
<dbReference type="GO" id="GO:0051321">
    <property type="term" value="P:meiotic cell cycle"/>
    <property type="evidence" value="ECO:0007669"/>
    <property type="project" value="UniProtKB-KW"/>
</dbReference>
<dbReference type="GO" id="GO:0000122">
    <property type="term" value="P:negative regulation of transcription by RNA polymerase II"/>
    <property type="evidence" value="ECO:0000316"/>
    <property type="project" value="MGI"/>
</dbReference>
<dbReference type="GO" id="GO:0018105">
    <property type="term" value="P:peptidyl-serine phosphorylation"/>
    <property type="evidence" value="ECO:0000314"/>
    <property type="project" value="UniProtKB"/>
</dbReference>
<dbReference type="GO" id="GO:0008284">
    <property type="term" value="P:positive regulation of cell population proliferation"/>
    <property type="evidence" value="ECO:0000314"/>
    <property type="project" value="BHF-UCL"/>
</dbReference>
<dbReference type="GO" id="GO:0032298">
    <property type="term" value="P:positive regulation of DNA-templated DNA replication initiation"/>
    <property type="evidence" value="ECO:0000316"/>
    <property type="project" value="MGI"/>
</dbReference>
<dbReference type="GO" id="GO:0045893">
    <property type="term" value="P:positive regulation of DNA-templated transcription"/>
    <property type="evidence" value="ECO:0000316"/>
    <property type="project" value="MGI"/>
</dbReference>
<dbReference type="GO" id="GO:0031453">
    <property type="term" value="P:positive regulation of heterochromatin formation"/>
    <property type="evidence" value="ECO:0007669"/>
    <property type="project" value="Ensembl"/>
</dbReference>
<dbReference type="GO" id="GO:0043687">
    <property type="term" value="P:post-translational protein modification"/>
    <property type="evidence" value="ECO:0007669"/>
    <property type="project" value="Ensembl"/>
</dbReference>
<dbReference type="GO" id="GO:0006813">
    <property type="term" value="P:potassium ion transport"/>
    <property type="evidence" value="ECO:0000316"/>
    <property type="project" value="MGI"/>
</dbReference>
<dbReference type="GO" id="GO:0007265">
    <property type="term" value="P:Ras protein signal transduction"/>
    <property type="evidence" value="ECO:0007669"/>
    <property type="project" value="Ensembl"/>
</dbReference>
<dbReference type="GO" id="GO:0043247">
    <property type="term" value="P:telomere maintenance in response to DNA damage"/>
    <property type="evidence" value="ECO:0007669"/>
    <property type="project" value="Ensembl"/>
</dbReference>
<dbReference type="CDD" id="cd07860">
    <property type="entry name" value="STKc_CDK2_3"/>
    <property type="match status" value="1"/>
</dbReference>
<dbReference type="FunFam" id="3.30.200.20:FF:000599">
    <property type="entry name" value="Cyclin-dependent kinase 2"/>
    <property type="match status" value="1"/>
</dbReference>
<dbReference type="FunFam" id="1.10.510.10:FF:000457">
    <property type="entry name" value="cyclin-dependent kinase 2 isoform X4"/>
    <property type="match status" value="1"/>
</dbReference>
<dbReference type="FunFam" id="1.10.510.10:FF:000328">
    <property type="entry name" value="Cyclin-dependent kinase 20 isoform 2"/>
    <property type="match status" value="1"/>
</dbReference>
<dbReference type="Gene3D" id="3.30.200.20">
    <property type="entry name" value="Phosphorylase Kinase, domain 1"/>
    <property type="match status" value="1"/>
</dbReference>
<dbReference type="Gene3D" id="1.10.510.10">
    <property type="entry name" value="Transferase(Phosphotransferase) domain 1"/>
    <property type="match status" value="1"/>
</dbReference>
<dbReference type="InterPro" id="IPR050108">
    <property type="entry name" value="CDK"/>
</dbReference>
<dbReference type="InterPro" id="IPR011009">
    <property type="entry name" value="Kinase-like_dom_sf"/>
</dbReference>
<dbReference type="InterPro" id="IPR000719">
    <property type="entry name" value="Prot_kinase_dom"/>
</dbReference>
<dbReference type="InterPro" id="IPR017441">
    <property type="entry name" value="Protein_kinase_ATP_BS"/>
</dbReference>
<dbReference type="InterPro" id="IPR008271">
    <property type="entry name" value="Ser/Thr_kinase_AS"/>
</dbReference>
<dbReference type="PANTHER" id="PTHR24056">
    <property type="entry name" value="CELL DIVISION PROTEIN KINASE"/>
    <property type="match status" value="1"/>
</dbReference>
<dbReference type="PANTHER" id="PTHR24056:SF521">
    <property type="entry name" value="CYCLIN-DEPENDENT KINASE 2"/>
    <property type="match status" value="1"/>
</dbReference>
<dbReference type="Pfam" id="PF00069">
    <property type="entry name" value="Pkinase"/>
    <property type="match status" value="1"/>
</dbReference>
<dbReference type="SMART" id="SM00220">
    <property type="entry name" value="S_TKc"/>
    <property type="match status" value="1"/>
</dbReference>
<dbReference type="SUPFAM" id="SSF56112">
    <property type="entry name" value="Protein kinase-like (PK-like)"/>
    <property type="match status" value="2"/>
</dbReference>
<dbReference type="PROSITE" id="PS00107">
    <property type="entry name" value="PROTEIN_KINASE_ATP"/>
    <property type="match status" value="1"/>
</dbReference>
<dbReference type="PROSITE" id="PS50011">
    <property type="entry name" value="PROTEIN_KINASE_DOM"/>
    <property type="match status" value="1"/>
</dbReference>
<dbReference type="PROSITE" id="PS00108">
    <property type="entry name" value="PROTEIN_KINASE_ST"/>
    <property type="match status" value="1"/>
</dbReference>
<feature type="chain" id="PRO_0000085771" description="Cyclin-dependent kinase 2">
    <location>
        <begin position="1"/>
        <end position="346"/>
    </location>
</feature>
<feature type="domain" description="Protein kinase" evidence="4">
    <location>
        <begin position="4"/>
        <end position="334"/>
    </location>
</feature>
<feature type="active site" description="Proton acceptor" evidence="4 5">
    <location>
        <position position="127"/>
    </location>
</feature>
<feature type="binding site" evidence="4">
    <location>
        <begin position="10"/>
        <end position="18"/>
    </location>
    <ligand>
        <name>ATP</name>
        <dbReference type="ChEBI" id="CHEBI:30616"/>
    </ligand>
</feature>
<feature type="binding site" evidence="4">
    <location>
        <position position="33"/>
    </location>
    <ligand>
        <name>ATP</name>
        <dbReference type="ChEBI" id="CHEBI:30616"/>
    </ligand>
</feature>
<feature type="binding site" evidence="4">
    <location>
        <begin position="81"/>
        <end position="83"/>
    </location>
    <ligand>
        <name>ATP</name>
        <dbReference type="ChEBI" id="CHEBI:30616"/>
    </ligand>
</feature>
<feature type="binding site" evidence="4">
    <location>
        <position position="86"/>
    </location>
    <ligand>
        <name>ATP</name>
        <dbReference type="ChEBI" id="CHEBI:30616"/>
    </ligand>
</feature>
<feature type="binding site" evidence="4">
    <location>
        <begin position="129"/>
        <end position="132"/>
    </location>
    <ligand>
        <name>ATP</name>
        <dbReference type="ChEBI" id="CHEBI:30616"/>
    </ligand>
</feature>
<feature type="binding site" evidence="2">
    <location>
        <position position="132"/>
    </location>
    <ligand>
        <name>Mg(2+)</name>
        <dbReference type="ChEBI" id="CHEBI:18420"/>
    </ligand>
</feature>
<feature type="binding site" evidence="4">
    <location>
        <position position="145"/>
    </location>
    <ligand>
        <name>ATP</name>
        <dbReference type="ChEBI" id="CHEBI:30616"/>
    </ligand>
</feature>
<feature type="binding site" evidence="2">
    <location>
        <position position="145"/>
    </location>
    <ligand>
        <name>Mg(2+)</name>
        <dbReference type="ChEBI" id="CHEBI:18420"/>
    </ligand>
</feature>
<feature type="site" description="CDK7 binding" evidence="2">
    <location>
        <position position="9"/>
    </location>
</feature>
<feature type="site" description="CDK7 binding" evidence="2">
    <location>
        <begin position="88"/>
        <end position="89"/>
    </location>
</feature>
<feature type="site" description="CDK7 binding" evidence="2">
    <location>
        <position position="166"/>
    </location>
</feature>
<feature type="modified residue" description="N-acetylmethionine" evidence="2">
    <location>
        <position position="1"/>
    </location>
</feature>
<feature type="modified residue" description="N6-acetyllysine" evidence="2">
    <location>
        <position position="6"/>
    </location>
</feature>
<feature type="modified residue" description="Phosphothreonine" evidence="2">
    <location>
        <position position="14"/>
    </location>
</feature>
<feature type="modified residue" description="Phosphotyrosine; by WEE1" evidence="6">
    <location>
        <position position="15"/>
    </location>
</feature>
<feature type="modified residue" description="Phosphotyrosine" evidence="2">
    <location>
        <position position="19"/>
    </location>
</feature>
<feature type="modified residue" description="Phosphothreonine; by CAK and CCRK" evidence="2">
    <location>
        <position position="160"/>
    </location>
</feature>
<feature type="modified residue" description="Phosphoserine" evidence="16">
    <location>
        <position position="218"/>
    </location>
</feature>
<feature type="splice variant" id="VSP_004800" description="In isoform CDK2-alpha." evidence="14">
    <location>
        <begin position="197"/>
        <end position="244"/>
    </location>
</feature>
<feature type="mutagenesis site" description="Loss of tyrosine phosphorylation by WEE1 and CABLES1." evidence="6">
    <original>Y</original>
    <variation>F</variation>
    <location>
        <position position="15"/>
    </location>
</feature>
<evidence type="ECO:0000250" key="1"/>
<evidence type="ECO:0000250" key="2">
    <source>
        <dbReference type="UniProtKB" id="P24941"/>
    </source>
</evidence>
<evidence type="ECO:0000250" key="3">
    <source>
        <dbReference type="UniProtKB" id="Q63699"/>
    </source>
</evidence>
<evidence type="ECO:0000255" key="4">
    <source>
        <dbReference type="PROSITE-ProRule" id="PRU00159"/>
    </source>
</evidence>
<evidence type="ECO:0000255" key="5">
    <source>
        <dbReference type="PROSITE-ProRule" id="PRU10027"/>
    </source>
</evidence>
<evidence type="ECO:0000269" key="6">
    <source>
    </source>
</evidence>
<evidence type="ECO:0000269" key="7">
    <source>
    </source>
</evidence>
<evidence type="ECO:0000269" key="8">
    <source>
    </source>
</evidence>
<evidence type="ECO:0000269" key="9">
    <source>
    </source>
</evidence>
<evidence type="ECO:0000269" key="10">
    <source>
    </source>
</evidence>
<evidence type="ECO:0000269" key="11">
    <source>
    </source>
</evidence>
<evidence type="ECO:0000269" key="12">
    <source>
    </source>
</evidence>
<evidence type="ECO:0000269" key="13">
    <source>
    </source>
</evidence>
<evidence type="ECO:0000303" key="14">
    <source ref="1"/>
</evidence>
<evidence type="ECO:0000305" key="15"/>
<evidence type="ECO:0007744" key="16">
    <source>
    </source>
</evidence>
<keyword id="KW-0007">Acetylation</keyword>
<keyword id="KW-0025">Alternative splicing</keyword>
<keyword id="KW-0067">ATP-binding</keyword>
<keyword id="KW-0131">Cell cycle</keyword>
<keyword id="KW-0132">Cell division</keyword>
<keyword id="KW-0963">Cytoplasm</keyword>
<keyword id="KW-0206">Cytoskeleton</keyword>
<keyword id="KW-0227">DNA damage</keyword>
<keyword id="KW-0234">DNA repair</keyword>
<keyword id="KW-0967">Endosome</keyword>
<keyword id="KW-0418">Kinase</keyword>
<keyword id="KW-0460">Magnesium</keyword>
<keyword id="KW-0469">Meiosis</keyword>
<keyword id="KW-0479">Metal-binding</keyword>
<keyword id="KW-0498">Mitosis</keyword>
<keyword id="KW-0547">Nucleotide-binding</keyword>
<keyword id="KW-0539">Nucleus</keyword>
<keyword id="KW-0597">Phosphoprotein</keyword>
<keyword id="KW-1185">Reference proteome</keyword>
<keyword id="KW-0723">Serine/threonine-protein kinase</keyword>
<keyword id="KW-0808">Transferase</keyword>
<protein>
    <recommendedName>
        <fullName>Cyclin-dependent kinase 2</fullName>
        <ecNumber evidence="12">2.7.11.22</ecNumber>
    </recommendedName>
    <alternativeName>
        <fullName>Cell division protein kinase 2</fullName>
    </alternativeName>
</protein>
<organism>
    <name type="scientific">Mus musculus</name>
    <name type="common">Mouse</name>
    <dbReference type="NCBI Taxonomy" id="10090"/>
    <lineage>
        <taxon>Eukaryota</taxon>
        <taxon>Metazoa</taxon>
        <taxon>Chordata</taxon>
        <taxon>Craniata</taxon>
        <taxon>Vertebrata</taxon>
        <taxon>Euteleostomi</taxon>
        <taxon>Mammalia</taxon>
        <taxon>Eutheria</taxon>
        <taxon>Euarchontoglires</taxon>
        <taxon>Glires</taxon>
        <taxon>Rodentia</taxon>
        <taxon>Myomorpha</taxon>
        <taxon>Muroidea</taxon>
        <taxon>Muridae</taxon>
        <taxon>Murinae</taxon>
        <taxon>Mus</taxon>
        <taxon>Mus</taxon>
    </lineage>
</organism>
<proteinExistence type="evidence at protein level"/>
<gene>
    <name type="primary">Cdk2</name>
    <name type="synonym">Cdkn2</name>
</gene>
<accession>P97377</accession>
<accession>O55105</accession>
<reference key="1">
    <citation type="submission" date="1996-07" db="EMBL/GenBank/DDBJ databases">
        <title>Exon-intron organization of the murine cyclin-dependent kinase-2 genes Cdk2-alpha and Cdk2-beta.</title>
        <authorList>
            <person name="Jun D."/>
            <person name="Lee Y.H."/>
            <person name="Park H.K."/>
            <person name="Kim Y.H."/>
        </authorList>
    </citation>
    <scope>NUCLEOTIDE SEQUENCE [MRNA] (ISOFORM CDK2-ALPHA)</scope>
    <source>
        <strain>C57BL/6J</strain>
    </source>
</reference>
<reference key="2">
    <citation type="submission" date="1998-01" db="EMBL/GenBank/DDBJ databases">
        <title>The 39 kDa form of CDK2 arises through alternative splicing, is expressed in many but not all mammals, and is an active kinase.</title>
        <authorList>
            <person name="Ellenrieder C."/>
            <person name="Bartosch B."/>
            <person name="Lee G.Y."/>
            <person name="Murphy M."/>
            <person name="Sweeney C."/>
            <person name="Hergersberg M."/>
            <person name="Hunt T."/>
            <person name="Carrington M."/>
            <person name="Jaussi R."/>
        </authorList>
    </citation>
    <scope>NUCLEOTIDE SEQUENCE [GENOMIC DNA / MRNA]</scope>
    <scope>ALTERNATIVE SPLICING</scope>
</reference>
<reference key="3">
    <citation type="journal article" date="2004" name="Genome Res.">
        <title>The status, quality, and expansion of the NIH full-length cDNA project: the Mammalian Gene Collection (MGC).</title>
        <authorList>
            <consortium name="The MGC Project Team"/>
        </authorList>
    </citation>
    <scope>NUCLEOTIDE SEQUENCE [LARGE SCALE MRNA] (ISOFORM CDK2-BETA)</scope>
    <source>
        <strain>FVB/N</strain>
        <tissue>Mammary gland</tissue>
    </source>
</reference>
<reference key="4">
    <citation type="journal article" date="2001" name="Cancer Res.">
        <title>Cables enhances cdk2 tyrosine 15 phosphorylation by Wee1, inhibits cell growth, and is lost in many human colon and squamous cancers.</title>
        <authorList>
            <person name="Wu C.-L."/>
            <person name="Kirley S.D."/>
            <person name="Xiao H."/>
            <person name="Chuang Y."/>
            <person name="Chung D.C."/>
            <person name="Zukerberg L.R."/>
        </authorList>
    </citation>
    <scope>PHOSPHORYLATION AT TYR-15</scope>
    <scope>MUTAGENESIS OF TYR-15</scope>
    <scope>IDENTIFICATION IN A COMPLEX WITH CABLES1; CCNA1 AND CCNE1</scope>
    <scope>INTERACTION WITH CABLES1</scope>
</reference>
<reference key="5">
    <citation type="journal article" date="2001" name="Eur. J. Biochem.">
        <title>ik3-1/Cables is a substrate for cyclin-dependent kinase 3 (cdk 3).</title>
        <authorList>
            <person name="Yamochi T."/>
            <person name="Semba K."/>
            <person name="Tsuji K."/>
            <person name="Mizumoto K."/>
            <person name="Sato H."/>
            <person name="Matsuura Y."/>
            <person name="Nishimoto I."/>
            <person name="Matsuoka M."/>
        </authorList>
    </citation>
    <scope>FUNCTION AS CABLES1 KINASE</scope>
</reference>
<reference key="6">
    <citation type="journal article" date="2003" name="Curr. Biol.">
        <title>Cdk2 knockout mice are viable.</title>
        <authorList>
            <person name="Berthet C."/>
            <person name="Aleem E."/>
            <person name="Coppola V."/>
            <person name="Tessarollo L."/>
            <person name="Kaldis P."/>
        </authorList>
    </citation>
    <scope>FUNCTION</scope>
    <scope>DISRUPTION PHENOTYPE</scope>
</reference>
<reference key="7">
    <citation type="journal article" date="2003" name="Nat. Genet.">
        <title>Cyclin-dependent kinase 2 is essential for meiosis but not for mitotic cell division in mice.</title>
        <authorList>
            <person name="Ortega S."/>
            <person name="Prieto I."/>
            <person name="Odajima J."/>
            <person name="Martin A."/>
            <person name="Dubus P."/>
            <person name="Sotillo R."/>
            <person name="Barbero J.L."/>
            <person name="Malumbres M."/>
            <person name="Barbacid M."/>
        </authorList>
    </citation>
    <scope>FUNCTION</scope>
    <scope>DISRUPTION PHENOTYPE</scope>
</reference>
<reference key="8">
    <citation type="journal article" date="2004" name="Genes Dev.">
        <title>Liver tumors escape negative control of proliferation via PI3K/Akt-mediated block of C/EBP alpha growth inhibitory activity.</title>
        <authorList>
            <person name="Wang G.L."/>
            <person name="Iakova P."/>
            <person name="Wilde M."/>
            <person name="Awad S."/>
            <person name="Timchenko N.A."/>
        </authorList>
    </citation>
    <scope>INTERACTION WITH CEBPA</scope>
</reference>
<reference key="9">
    <citation type="journal article" date="2008" name="Mol. Biol. Cell">
        <title>p21 Inhibits Cdk1 in the absence of Cdk2 to maintain the G1/S phase DNA damage checkpoint.</title>
        <authorList>
            <person name="Satyanarayana A."/>
            <person name="Hilton M.B."/>
            <person name="Kaldis P."/>
        </authorList>
    </citation>
    <scope>FUNCTION</scope>
    <scope>DISRUPTION PHENOTYPE</scope>
</reference>
<reference key="10">
    <citation type="journal article" date="2010" name="Cell">
        <title>A tissue-specific atlas of mouse protein phosphorylation and expression.</title>
        <authorList>
            <person name="Huttlin E.L."/>
            <person name="Jedrychowski M.P."/>
            <person name="Elias J.E."/>
            <person name="Goswami T."/>
            <person name="Rad R."/>
            <person name="Beausoleil S.A."/>
            <person name="Villen J."/>
            <person name="Haas W."/>
            <person name="Sowa M.E."/>
            <person name="Gygi S.P."/>
        </authorList>
    </citation>
    <scope>PHOSPHORYLATION [LARGE SCALE ANALYSIS] AT SER-218</scope>
    <scope>IDENTIFICATION BY MASS SPECTROMETRY [LARGE SCALE ANALYSIS]</scope>
    <source>
        <tissue>Lung</tissue>
        <tissue>Spleen</tissue>
        <tissue>Testis</tissue>
    </source>
</reference>
<reference key="11">
    <citation type="journal article" date="2013" name="J. Biol. Chem.">
        <title>Foxp3 protein stability is regulated by cyclin-dependent kinase 2.</title>
        <authorList>
            <person name="Morawski P.A."/>
            <person name="Mehra P."/>
            <person name="Chen C."/>
            <person name="Bhatti T."/>
            <person name="Wells A.D."/>
        </authorList>
    </citation>
    <scope>FUNCTION</scope>
    <scope>CATALYTIC ACTIVITY</scope>
</reference>
<reference key="12">
    <citation type="journal article" date="2014" name="Nature">
        <title>Cell-cycle-regulated activation of Akt kinase by phosphorylation at its carboxyl terminus.</title>
        <authorList>
            <person name="Liu P."/>
            <person name="Begley M."/>
            <person name="Michowski W."/>
            <person name="Inuzuka H."/>
            <person name="Ginzberg M."/>
            <person name="Gao D."/>
            <person name="Tsou P."/>
            <person name="Gan W."/>
            <person name="Papa A."/>
            <person name="Kim B.M."/>
            <person name="Wan L."/>
            <person name="Singh A."/>
            <person name="Zhai B."/>
            <person name="Yuan M."/>
            <person name="Wang Z."/>
            <person name="Gygi S.P."/>
            <person name="Lee T.H."/>
            <person name="Lu K.P."/>
            <person name="Toker A."/>
            <person name="Pandolfi P.P."/>
            <person name="Asara J.M."/>
            <person name="Kirschner M.W."/>
            <person name="Sicinski P."/>
            <person name="Cantley L."/>
            <person name="Wei W."/>
        </authorList>
    </citation>
    <scope>FUNCTION</scope>
</reference>
<comment type="function">
    <text evidence="2 7 8 9 11 12 13">Serine/threonine-protein kinase involved in the control of the cell cycle; essential for meiosis, but dispensable for mitosis (PubMed:11733001, PubMed:12923533, PubMed:14561402, PubMed:17942597, PubMed:23853094). Phosphorylates CABLES1, CTNNB1, CDK2AP2, ERCC6, NBN, USP37, p53/TP53, NPM1, CDK7, RB1, BRCA2, MYC, NPAT, EZH2 (PubMed:11733001, PubMed:23853094). Triggers duplication of centrosomes and DNA (By similarity). Acts at the G1-S transition to promote the E2F transcriptional program and the initiation of DNA synthesis, and modulates G2 progression; controls the timing of entry into mitosis/meiosis by controlling the subsequent activation of cyclin B/CDK1 by phosphorylation, and coordinates the activation of cyclin B/CDK1 at the centrosome and in the nucleus (By similarity). Crucial role in orchestrating a fine balance between cellular proliferation, cell death, and DNA repair in embryonic stem cells (ESCs) (By similarity). Activity of CDK2 is maximal during S phase and G2; activated by interaction with cyclin E during the early stages of DNA synthesis to permit G1-S transition, and subsequently activated by cyclin A2 (cyclin A1 in germ cells) during the late stages of DNA replication to drive the transition from S phase to mitosis, the G2 phase (By similarity). EZH2 phosphorylation promotes H3K27me3 maintenance and epigenetic gene silencing (By similarity). Cyclin E/CDK2 prevents oxidative stress-mediated Ras-induced senescence by phosphorylating MYC (By similarity). Involved in G1-S phase DNA damage checkpoint that prevents cells with damaged DNA from initiating mitosis; regulates homologous recombination-dependent repair by phosphorylating BRCA2, this phosphorylation is low in S phase when recombination is active, but increases as cells progress towards mitosis (By similarity). In response to DNA damage, double-strand break repair by homologous recombination a reduction of CDK2-mediated BRCA2 phosphorylation (By similarity). Involved in regulation of telomere repair by mediating phosphorylation of NBN (By similarity). Phosphorylation of RB1 disturbs its interaction with E2F1 (By similarity). NPM1 phosphorylation by cyclin E/CDK2 promotes its dissociation from unduplicated centrosomes, thus initiating centrosome duplication (By similarity). Cyclin E/CDK2-mediated phosphorylation of NPAT at G1-S transition and until prophase stimulates the NPAT-mediated activation of histone gene transcription during S phase (By similarity). Required for vitamin D-mediated growth inhibition by being itself inactivated (By similarity). Involved in the nitric oxide- (NO) mediated signaling in a nitrosylation/activation-dependent manner (By similarity). USP37 is activated by phosphorylation and thus triggers G1-S transition (By similarity). CTNNB1 phosphorylation regulates insulin internalization (By similarity). Phosphorylates FOXP3 and negatively regulates its transcriptional activity and protein stability (PubMed:23853094). Phosphorylates ERCC6 which is essential for its chromatin remodeling activity at DNA double-strand breaks (By similarity). Acts as a regulator of the phosphatidylinositol 3-kinase/protein kinase B signal transduction by mediating phosphorylation of the C-terminus of protein kinase B (PKB/AKT1 and PKB/AKT2), promoting its activation (PubMed:24670654).</text>
</comment>
<comment type="catalytic activity">
    <reaction evidence="12">
        <text>L-seryl-[protein] + ATP = O-phospho-L-seryl-[protein] + ADP + H(+)</text>
        <dbReference type="Rhea" id="RHEA:17989"/>
        <dbReference type="Rhea" id="RHEA-COMP:9863"/>
        <dbReference type="Rhea" id="RHEA-COMP:11604"/>
        <dbReference type="ChEBI" id="CHEBI:15378"/>
        <dbReference type="ChEBI" id="CHEBI:29999"/>
        <dbReference type="ChEBI" id="CHEBI:30616"/>
        <dbReference type="ChEBI" id="CHEBI:83421"/>
        <dbReference type="ChEBI" id="CHEBI:456216"/>
        <dbReference type="EC" id="2.7.11.22"/>
    </reaction>
</comment>
<comment type="catalytic activity">
    <reaction evidence="12">
        <text>L-threonyl-[protein] + ATP = O-phospho-L-threonyl-[protein] + ADP + H(+)</text>
        <dbReference type="Rhea" id="RHEA:46608"/>
        <dbReference type="Rhea" id="RHEA-COMP:11060"/>
        <dbReference type="Rhea" id="RHEA-COMP:11605"/>
        <dbReference type="ChEBI" id="CHEBI:15378"/>
        <dbReference type="ChEBI" id="CHEBI:30013"/>
        <dbReference type="ChEBI" id="CHEBI:30616"/>
        <dbReference type="ChEBI" id="CHEBI:61977"/>
        <dbReference type="ChEBI" id="CHEBI:456216"/>
        <dbReference type="EC" id="2.7.11.22"/>
    </reaction>
</comment>
<comment type="cofactor">
    <cofactor evidence="2">
        <name>Mg(2+)</name>
        <dbReference type="ChEBI" id="CHEBI:18420"/>
    </cofactor>
    <text evidence="2">Binds 2 Mg(2+) ions.</text>
</comment>
<comment type="activity regulation">
    <text evidence="2">Phosphorylation at Thr-14 or Tyr-15 inactivates the enzyme, while phosphorylation at Thr-160 activates it. Stimulated by MYC. Inactivated by CDKN1A (p21) (By similarity).</text>
</comment>
<comment type="subunit">
    <text evidence="2 3 6 10">Found in a complex with CABLES1, CCNA1 and CCNE1. Interacts with CABLES1 (PubMed:11585773). Interacts with UHRF2. Part of a complex consisting of UHRF2, CDK2 and CCNE1. Interacts with the Speedy/Ringo proteins SPDYA and SPDYC. Interaction with SPDYA promotes kinase activation via a conformation change that alleviates obstruction of the substrate-binding cleft by the T-loop. Found in a complex with both SPDYA and CDKN1B/KIP1. Binds to RB1 and CDK7. Binding to CDKN1A (p21) leads to CDK2/cyclin E inactivation at the G1-S phase DNA damage checkpoint, thereby arresting cells at the G1-S transition during DNA repair. Associated with PTPN6 and beta-catenin/CTNNB1. Interacts with CACUL1. May interact with CEP63. Interacts with ANKRD17 (By similarity). Interacts with CEBPA (when phosphorylated) (PubMed:15107404). Forms a ternary complex with CCNA2 and CDKN1B; CDKN1B inhibits the kinase activity of CDK2 through conformational rearrangements. Interacts with cyclins A, B1, B3, D, or E. Interacts with CDK2AP2 (By similarity).</text>
</comment>
<comment type="interaction">
    <interactant intactId="EBI-847048">
        <id>P97377</id>
    </interactant>
    <interactant intactId="EBI-846980">
        <id>P51943</id>
        <label>Ccna2</label>
    </interactant>
    <organismsDiffer>false</organismsDiffer>
    <experiments>3</experiments>
</comment>
<comment type="interaction">
    <interactant intactId="EBI-847048">
        <id>P97377</id>
    </interactant>
    <interactant intactId="EBI-643090">
        <id>Q61457</id>
        <label>Ccne1</label>
    </interactant>
    <organismsDiffer>false</organismsDiffer>
    <experiments>3</experiments>
</comment>
<comment type="subcellular location">
    <subcellularLocation>
        <location evidence="1">Cytoplasm</location>
        <location evidence="1">Cytoskeleton</location>
        <location evidence="1">Microtubule organizing center</location>
        <location evidence="1">Centrosome</location>
    </subcellularLocation>
    <subcellularLocation>
        <location evidence="1">Nucleus</location>
        <location evidence="1">Cajal body</location>
    </subcellularLocation>
    <subcellularLocation>
        <location evidence="1">Cytoplasm</location>
    </subcellularLocation>
    <subcellularLocation>
        <location evidence="1">Endosome</location>
    </subcellularLocation>
    <text evidence="1">Localized at the centrosomes in late G2 phase after separation of the centrosomes but before the start of prophase. Nuclear-cytoplasmic trafficking is mediated during the inhibition by 1,25-(OH)(2)D(3) (By similarity).</text>
</comment>
<comment type="alternative products">
    <event type="alternative splicing"/>
    <isoform>
        <id>P97377-1</id>
        <name>CDK2-beta</name>
        <sequence type="displayed"/>
    </isoform>
    <isoform>
        <id>P97377-2</id>
        <name>CDK2-alpha</name>
        <sequence type="described" ref="VSP_004800"/>
    </isoform>
</comment>
<comment type="PTM">
    <text evidence="2">Phosphorylated at Thr-160 by CDK7 in a CAK complex. Phosphorylation at Thr-160 promotes kinase activity, whereas phosphorylation at Tyr-15 by WEE1 reduces slightly kinase activity. Phosphorylated on Thr-14 and Tyr-15 during S and G2 phases before being dephosphorylated by CDC25A.</text>
</comment>
<comment type="PTM">
    <text evidence="2">Nitrosylated after treatment with nitric oxide (DETA-NO).</text>
</comment>
<comment type="disruption phenotype">
    <text evidence="8 9 11">Reduced body size and impaired neural progenitor cell proliferation. Sterility due to defective meiosis; no effect on mitotic cells. Premature translocation of CDK1 from the cytoplasm to the nucleus compensating CDK2 loss. Prolonged and impaired DNA repair activity upon DNA damage by gamma-irradiation.</text>
</comment>
<comment type="similarity">
    <text evidence="15">Belongs to the protein kinase superfamily. CMGC Ser/Thr protein kinase family. CDC2/CDKX subfamily.</text>
</comment>
<sequence length="346" mass="38978">MENFQKVEKIGEGTYGVVYKAKNKLTGEVVALKKIRLDTETEGVPSTAIREISLLKELNHPNIVKLLDVIHTENKLYLVFEFLHQDLKKFMDASALTGIPLPLIKSYLFQLLQGLAFCHSHRVLHRDLKPQNLLINAEGSIKLADFGLARAFGVPVRTYTHEVVTLWYRAPEILLGCKYYSTAVDIWSLGCIFAEMHLVCTQHHAKCCGEHRRNGRHSLCPLCSYLEVAASQGGGMTAVSAPHPVTRRALFPGDSEIDQLFRIFRTLGTPDEVVWPGVTSMPDYKPSFPKWARQDFSKVVPPLDEDGRSLLSQMLHYDPNKRISAKAALAHPFFQDVTKPVPHLRL</sequence>
<name>CDK2_MOUSE</name>